<proteinExistence type="inferred from homology"/>
<reference key="1">
    <citation type="journal article" date="2003" name="Mol. Microbiol.">
        <title>Genome-based analysis of virulence genes in a non-biofilm-forming Staphylococcus epidermidis strain (ATCC 12228).</title>
        <authorList>
            <person name="Zhang Y.-Q."/>
            <person name="Ren S.-X."/>
            <person name="Li H.-L."/>
            <person name="Wang Y.-X."/>
            <person name="Fu G."/>
            <person name="Yang J."/>
            <person name="Qin Z.-Q."/>
            <person name="Miao Y.-G."/>
            <person name="Wang W.-Y."/>
            <person name="Chen R.-S."/>
            <person name="Shen Y."/>
            <person name="Chen Z."/>
            <person name="Yuan Z.-H."/>
            <person name="Zhao G.-P."/>
            <person name="Qu D."/>
            <person name="Danchin A."/>
            <person name="Wen Y.-M."/>
        </authorList>
    </citation>
    <scope>NUCLEOTIDE SEQUENCE [LARGE SCALE GENOMIC DNA]</scope>
    <source>
        <strain>ATCC 12228 / FDA PCI 1200</strain>
    </source>
</reference>
<sequence length="413" mass="45326">MKVLIVGAGGREHALASKINQSPIVDKVYAIPGNDAMVNIAEVHSEIAESDHQAILHFAQHNAIDWVIIGPEQPLIDGLADLLRNANIKVFGPGQDAAQIEGSKLFAKQLMDKYRIPTAEYKEVSSRNEALQYVETCDLPIVIKKDGLAAGKGVIIAFTREDALDGVKKIYQEEKGKVVFESYLEGEEFSLMTFVNGDYAVPFDCIAQDHKRAFDNDQGPNTGGMGAYCPVPHIDASVLEQTNKEIAQPIAKAMAQEGHDFFGLLYIGAILTKDGPKVIEFNARFGDPEAQVLLTRLESDLMQLIIDLENCQPIHFNWKDEAVVGVMLASKGYPGSYEKGHEISGFNLDSHYYVSGLKKEGQCFVNSGGRVILAIGEGPTVEKAQANAYEHARQIKSDNLFYRNDIGNKAITK</sequence>
<dbReference type="EC" id="6.3.4.13" evidence="2"/>
<dbReference type="EMBL" id="AE015929">
    <property type="protein sequence ID" value="AAO04369.1"/>
    <property type="status" value="ALT_INIT"/>
    <property type="molecule type" value="Genomic_DNA"/>
</dbReference>
<dbReference type="RefSeq" id="NP_764327.1">
    <property type="nucleotide sequence ID" value="NC_004461.1"/>
</dbReference>
<dbReference type="RefSeq" id="WP_002485333.1">
    <property type="nucleotide sequence ID" value="NZ_WBME01000028.1"/>
</dbReference>
<dbReference type="SMR" id="Q8CT26"/>
<dbReference type="GeneID" id="50019088"/>
<dbReference type="KEGG" id="sep:SE_0772"/>
<dbReference type="PATRIC" id="fig|176280.10.peg.744"/>
<dbReference type="eggNOG" id="COG0151">
    <property type="taxonomic scope" value="Bacteria"/>
</dbReference>
<dbReference type="HOGENOM" id="CLU_027420_3_1_9"/>
<dbReference type="OrthoDB" id="9807240at2"/>
<dbReference type="UniPathway" id="UPA00074">
    <property type="reaction ID" value="UER00125"/>
</dbReference>
<dbReference type="Proteomes" id="UP000001411">
    <property type="component" value="Chromosome"/>
</dbReference>
<dbReference type="GO" id="GO:0005524">
    <property type="term" value="F:ATP binding"/>
    <property type="evidence" value="ECO:0007669"/>
    <property type="project" value="UniProtKB-KW"/>
</dbReference>
<dbReference type="GO" id="GO:0046872">
    <property type="term" value="F:metal ion binding"/>
    <property type="evidence" value="ECO:0007669"/>
    <property type="project" value="UniProtKB-KW"/>
</dbReference>
<dbReference type="GO" id="GO:0004637">
    <property type="term" value="F:phosphoribosylamine-glycine ligase activity"/>
    <property type="evidence" value="ECO:0007669"/>
    <property type="project" value="UniProtKB-UniRule"/>
</dbReference>
<dbReference type="GO" id="GO:0006189">
    <property type="term" value="P:'de novo' IMP biosynthetic process"/>
    <property type="evidence" value="ECO:0007669"/>
    <property type="project" value="UniProtKB-UniRule"/>
</dbReference>
<dbReference type="GO" id="GO:0009113">
    <property type="term" value="P:purine nucleobase biosynthetic process"/>
    <property type="evidence" value="ECO:0007669"/>
    <property type="project" value="InterPro"/>
</dbReference>
<dbReference type="FunFam" id="3.40.50.20:FF:000006">
    <property type="entry name" value="Phosphoribosylamine--glycine ligase, chloroplastic"/>
    <property type="match status" value="1"/>
</dbReference>
<dbReference type="Gene3D" id="3.40.50.20">
    <property type="match status" value="1"/>
</dbReference>
<dbReference type="Gene3D" id="3.30.1490.20">
    <property type="entry name" value="ATP-grasp fold, A domain"/>
    <property type="match status" value="1"/>
</dbReference>
<dbReference type="Gene3D" id="3.30.470.20">
    <property type="entry name" value="ATP-grasp fold, B domain"/>
    <property type="match status" value="1"/>
</dbReference>
<dbReference type="Gene3D" id="3.90.600.10">
    <property type="entry name" value="Phosphoribosylglycinamide synthetase, C-terminal domain"/>
    <property type="match status" value="1"/>
</dbReference>
<dbReference type="HAMAP" id="MF_00138">
    <property type="entry name" value="GARS"/>
    <property type="match status" value="1"/>
</dbReference>
<dbReference type="InterPro" id="IPR011761">
    <property type="entry name" value="ATP-grasp"/>
</dbReference>
<dbReference type="InterPro" id="IPR013815">
    <property type="entry name" value="ATP_grasp_subdomain_1"/>
</dbReference>
<dbReference type="InterPro" id="IPR016185">
    <property type="entry name" value="PreATP-grasp_dom_sf"/>
</dbReference>
<dbReference type="InterPro" id="IPR020561">
    <property type="entry name" value="PRibGlycinamid_synth_ATP-grasp"/>
</dbReference>
<dbReference type="InterPro" id="IPR000115">
    <property type="entry name" value="PRibGlycinamide_synth"/>
</dbReference>
<dbReference type="InterPro" id="IPR020560">
    <property type="entry name" value="PRibGlycinamide_synth_C-dom"/>
</dbReference>
<dbReference type="InterPro" id="IPR037123">
    <property type="entry name" value="PRibGlycinamide_synth_C_sf"/>
</dbReference>
<dbReference type="InterPro" id="IPR020559">
    <property type="entry name" value="PRibGlycinamide_synth_CS"/>
</dbReference>
<dbReference type="InterPro" id="IPR020562">
    <property type="entry name" value="PRibGlycinamide_synth_N"/>
</dbReference>
<dbReference type="InterPro" id="IPR011054">
    <property type="entry name" value="Rudment_hybrid_motif"/>
</dbReference>
<dbReference type="NCBIfam" id="TIGR00877">
    <property type="entry name" value="purD"/>
    <property type="match status" value="1"/>
</dbReference>
<dbReference type="PANTHER" id="PTHR43472">
    <property type="entry name" value="PHOSPHORIBOSYLAMINE--GLYCINE LIGASE"/>
    <property type="match status" value="1"/>
</dbReference>
<dbReference type="PANTHER" id="PTHR43472:SF1">
    <property type="entry name" value="PHOSPHORIBOSYLAMINE--GLYCINE LIGASE, CHLOROPLASTIC"/>
    <property type="match status" value="1"/>
</dbReference>
<dbReference type="Pfam" id="PF01071">
    <property type="entry name" value="GARS_A"/>
    <property type="match status" value="1"/>
</dbReference>
<dbReference type="Pfam" id="PF02843">
    <property type="entry name" value="GARS_C"/>
    <property type="match status" value="1"/>
</dbReference>
<dbReference type="Pfam" id="PF02844">
    <property type="entry name" value="GARS_N"/>
    <property type="match status" value="1"/>
</dbReference>
<dbReference type="SMART" id="SM01209">
    <property type="entry name" value="GARS_A"/>
    <property type="match status" value="1"/>
</dbReference>
<dbReference type="SMART" id="SM01210">
    <property type="entry name" value="GARS_C"/>
    <property type="match status" value="1"/>
</dbReference>
<dbReference type="SUPFAM" id="SSF56059">
    <property type="entry name" value="Glutathione synthetase ATP-binding domain-like"/>
    <property type="match status" value="1"/>
</dbReference>
<dbReference type="SUPFAM" id="SSF52440">
    <property type="entry name" value="PreATP-grasp domain"/>
    <property type="match status" value="1"/>
</dbReference>
<dbReference type="SUPFAM" id="SSF51246">
    <property type="entry name" value="Rudiment single hybrid motif"/>
    <property type="match status" value="1"/>
</dbReference>
<dbReference type="PROSITE" id="PS50975">
    <property type="entry name" value="ATP_GRASP"/>
    <property type="match status" value="1"/>
</dbReference>
<dbReference type="PROSITE" id="PS00184">
    <property type="entry name" value="GARS"/>
    <property type="match status" value="1"/>
</dbReference>
<accession>Q8CT26</accession>
<comment type="catalytic activity">
    <reaction evidence="2">
        <text>5-phospho-beta-D-ribosylamine + glycine + ATP = N(1)-(5-phospho-beta-D-ribosyl)glycinamide + ADP + phosphate + H(+)</text>
        <dbReference type="Rhea" id="RHEA:17453"/>
        <dbReference type="ChEBI" id="CHEBI:15378"/>
        <dbReference type="ChEBI" id="CHEBI:30616"/>
        <dbReference type="ChEBI" id="CHEBI:43474"/>
        <dbReference type="ChEBI" id="CHEBI:57305"/>
        <dbReference type="ChEBI" id="CHEBI:58681"/>
        <dbReference type="ChEBI" id="CHEBI:143788"/>
        <dbReference type="ChEBI" id="CHEBI:456216"/>
        <dbReference type="EC" id="6.3.4.13"/>
    </reaction>
</comment>
<comment type="cofactor">
    <cofactor evidence="1">
        <name>Mg(2+)</name>
        <dbReference type="ChEBI" id="CHEBI:18420"/>
    </cofactor>
    <cofactor evidence="1">
        <name>Mn(2+)</name>
        <dbReference type="ChEBI" id="CHEBI:29035"/>
    </cofactor>
    <text evidence="1">Binds 1 Mg(2+) or Mn(2+) ion per subunit.</text>
</comment>
<comment type="pathway">
    <text evidence="2">Purine metabolism; IMP biosynthesis via de novo pathway; N(1)-(5-phospho-D-ribosyl)glycinamide from 5-phospho-alpha-D-ribose 1-diphosphate: step 2/2.</text>
</comment>
<comment type="similarity">
    <text evidence="2">Belongs to the GARS family.</text>
</comment>
<comment type="sequence caution" evidence="3">
    <conflict type="erroneous initiation">
        <sequence resource="EMBL-CDS" id="AAO04369"/>
    </conflict>
</comment>
<evidence type="ECO:0000250" key="1"/>
<evidence type="ECO:0000255" key="2">
    <source>
        <dbReference type="HAMAP-Rule" id="MF_00138"/>
    </source>
</evidence>
<evidence type="ECO:0000305" key="3"/>
<feature type="chain" id="PRO_0000151484" description="Phosphoribosylamine--glycine ligase">
    <location>
        <begin position="1"/>
        <end position="413"/>
    </location>
</feature>
<feature type="domain" description="ATP-grasp" evidence="2">
    <location>
        <begin position="108"/>
        <end position="310"/>
    </location>
</feature>
<feature type="binding site" evidence="2">
    <location>
        <begin position="134"/>
        <end position="190"/>
    </location>
    <ligand>
        <name>ATP</name>
        <dbReference type="ChEBI" id="CHEBI:30616"/>
    </ligand>
</feature>
<feature type="binding site" evidence="2">
    <location>
        <position position="280"/>
    </location>
    <ligand>
        <name>Mg(2+)</name>
        <dbReference type="ChEBI" id="CHEBI:18420"/>
    </ligand>
</feature>
<feature type="binding site" evidence="2">
    <location>
        <position position="282"/>
    </location>
    <ligand>
        <name>Mg(2+)</name>
        <dbReference type="ChEBI" id="CHEBI:18420"/>
    </ligand>
</feature>
<gene>
    <name evidence="2" type="primary">purD</name>
    <name type="ordered locus">SE_0772</name>
</gene>
<keyword id="KW-0067">ATP-binding</keyword>
<keyword id="KW-0436">Ligase</keyword>
<keyword id="KW-0460">Magnesium</keyword>
<keyword id="KW-0464">Manganese</keyword>
<keyword id="KW-0479">Metal-binding</keyword>
<keyword id="KW-0547">Nucleotide-binding</keyword>
<keyword id="KW-0658">Purine biosynthesis</keyword>
<protein>
    <recommendedName>
        <fullName evidence="2">Phosphoribosylamine--glycine ligase</fullName>
        <ecNumber evidence="2">6.3.4.13</ecNumber>
    </recommendedName>
    <alternativeName>
        <fullName evidence="2">GARS</fullName>
    </alternativeName>
    <alternativeName>
        <fullName evidence="2">Glycinamide ribonucleotide synthetase</fullName>
    </alternativeName>
    <alternativeName>
        <fullName evidence="2">Phosphoribosylglycinamide synthetase</fullName>
    </alternativeName>
</protein>
<name>PUR2_STAES</name>
<organism>
    <name type="scientific">Staphylococcus epidermidis (strain ATCC 12228 / FDA PCI 1200)</name>
    <dbReference type="NCBI Taxonomy" id="176280"/>
    <lineage>
        <taxon>Bacteria</taxon>
        <taxon>Bacillati</taxon>
        <taxon>Bacillota</taxon>
        <taxon>Bacilli</taxon>
        <taxon>Bacillales</taxon>
        <taxon>Staphylococcaceae</taxon>
        <taxon>Staphylococcus</taxon>
    </lineage>
</organism>